<evidence type="ECO:0000305" key="1"/>
<reference key="1">
    <citation type="journal article" date="1997" name="Science">
        <title>The complete genome sequence of Escherichia coli K-12.</title>
        <authorList>
            <person name="Blattner F.R."/>
            <person name="Plunkett G. III"/>
            <person name="Bloch C.A."/>
            <person name="Perna N.T."/>
            <person name="Burland V."/>
            <person name="Riley M."/>
            <person name="Collado-Vides J."/>
            <person name="Glasner J.D."/>
            <person name="Rode C.K."/>
            <person name="Mayhew G.F."/>
            <person name="Gregor J."/>
            <person name="Davis N.W."/>
            <person name="Kirkpatrick H.A."/>
            <person name="Goeden M.A."/>
            <person name="Rose D.J."/>
            <person name="Mau B."/>
            <person name="Shao Y."/>
        </authorList>
    </citation>
    <scope>NUCLEOTIDE SEQUENCE [LARGE SCALE GENOMIC DNA]</scope>
    <source>
        <strain>K12 / MG1655 / ATCC 47076</strain>
    </source>
</reference>
<feature type="chain" id="PRO_0000446257" description="Insertion element IS1 9 protein InsA">
    <location>
        <begin position="1"/>
        <end position="91"/>
    </location>
</feature>
<sequence>MASVSISCPSCSATDGVVRNGKSTAGHQRYLCSHCRKTWQLQFTYTASQPGTHQKIIDMAMNGVGCRATARIMGVGLNTILRHLKNSGRSR</sequence>
<keyword id="KW-0233">DNA recombination</keyword>
<keyword id="KW-1185">Reference proteome</keyword>
<keyword id="KW-0814">Transposable element</keyword>
<keyword id="KW-0815">Transposition</keyword>
<comment type="function">
    <text>Absolutely required for transposition of IS1.</text>
</comment>
<comment type="similarity">
    <text evidence="1">Belongs to the IS1 elements InsA family.</text>
</comment>
<accession>A0A385XJ53</accession>
<proteinExistence type="inferred from homology"/>
<dbReference type="EMBL" id="U00096">
    <property type="protein sequence ID" value="AYC08168.1"/>
    <property type="molecule type" value="Genomic_DNA"/>
</dbReference>
<dbReference type="SMR" id="A0A385XJ53"/>
<dbReference type="FunCoup" id="A0A385XJ53">
    <property type="interactions" value="9"/>
</dbReference>
<dbReference type="DNASU" id="948449"/>
<dbReference type="EnsemblBacteria" id="AYC08168">
    <property type="protein sequence ID" value="AYC08168"/>
    <property type="gene ID" value="b4709"/>
</dbReference>
<dbReference type="KEGG" id="eco:b0022"/>
<dbReference type="KEGG" id="eco:b1894"/>
<dbReference type="KEGG" id="eco:b3444"/>
<dbReference type="KEGG" id="ecoc:C3026_00105"/>
<dbReference type="InParanoid" id="A0A385XJ53"/>
<dbReference type="OMA" id="HCKSEDL"/>
<dbReference type="PRO" id="PR:A0A385XJ53"/>
<dbReference type="Proteomes" id="UP000000625">
    <property type="component" value="Chromosome"/>
</dbReference>
<dbReference type="GO" id="GO:0006313">
    <property type="term" value="P:DNA transposition"/>
    <property type="evidence" value="ECO:0000318"/>
    <property type="project" value="GO_Central"/>
</dbReference>
<dbReference type="InterPro" id="IPR024431">
    <property type="entry name" value="InsA_HTH_dom"/>
</dbReference>
<dbReference type="InterPro" id="IPR003220">
    <property type="entry name" value="InsA_N_dom_Znf"/>
</dbReference>
<dbReference type="InterPro" id="IPR051252">
    <property type="entry name" value="IS1_transposase_InsA"/>
</dbReference>
<dbReference type="PANTHER" id="PTHR47923">
    <property type="entry name" value="INSERTION ELEMENT IS1 1 PROTEIN INSA-RELATED"/>
    <property type="match status" value="1"/>
</dbReference>
<dbReference type="PANTHER" id="PTHR47923:SF1">
    <property type="entry name" value="INSERTION ELEMENT IS1 1 PROTEIN INSA-RELATED"/>
    <property type="match status" value="1"/>
</dbReference>
<dbReference type="Pfam" id="PF12759">
    <property type="entry name" value="HTH_Tnp_IS1"/>
    <property type="match status" value="1"/>
</dbReference>
<dbReference type="Pfam" id="PF03811">
    <property type="entry name" value="Zn_ribbon_InsA"/>
    <property type="match status" value="1"/>
</dbReference>
<gene>
    <name type="primary">insA9</name>
    <name type="ordered locus">b4709</name>
</gene>
<organism>
    <name type="scientific">Escherichia coli (strain K12)</name>
    <dbReference type="NCBI Taxonomy" id="83333"/>
    <lineage>
        <taxon>Bacteria</taxon>
        <taxon>Pseudomonadati</taxon>
        <taxon>Pseudomonadota</taxon>
        <taxon>Gammaproteobacteria</taxon>
        <taxon>Enterobacterales</taxon>
        <taxon>Enterobacteriaceae</taxon>
        <taxon>Escherichia</taxon>
    </lineage>
</organism>
<name>INSA9_ECOLI</name>
<protein>
    <recommendedName>
        <fullName>Insertion element IS1 9 protein InsA</fullName>
    </recommendedName>
    <alternativeName>
        <fullName>IS1 repressor TnpA</fullName>
    </alternativeName>
</protein>